<proteinExistence type="evidence at protein level"/>
<name>RN182_HUMAN</name>
<feature type="chain" id="PRO_0000261620" description="E3 ubiquitin-protein ligase RNF182">
    <location>
        <begin position="1"/>
        <end position="247"/>
    </location>
</feature>
<feature type="transmembrane region" description="Helical" evidence="2">
    <location>
        <begin position="184"/>
        <end position="204"/>
    </location>
</feature>
<feature type="transmembrane region" description="Helical" evidence="2">
    <location>
        <begin position="211"/>
        <end position="231"/>
    </location>
</feature>
<feature type="zinc finger region" description="RING-type" evidence="3">
    <location>
        <begin position="20"/>
        <end position="68"/>
    </location>
</feature>
<feature type="sequence variant" id="VAR_035959" description="In a colorectal cancer sample; somatic mutation." evidence="4">
    <original>V</original>
    <variation>A</variation>
    <location>
        <position position="43"/>
    </location>
</feature>
<feature type="sequence variant" id="VAR_035960" description="In a colorectal cancer sample; somatic mutation." evidence="4">
    <original>P</original>
    <variation>L</variation>
    <location>
        <position position="58"/>
    </location>
</feature>
<feature type="sequence conflict" description="In Ref. 1; BAC03481." evidence="8" ref="1">
    <original>L</original>
    <variation>P</variation>
    <location>
        <position position="108"/>
    </location>
</feature>
<feature type="sequence conflict" description="In Ref. 1; BAC03481." evidence="8" ref="1">
    <original>E</original>
    <variation>K</variation>
    <location>
        <position position="139"/>
    </location>
</feature>
<organism>
    <name type="scientific">Homo sapiens</name>
    <name type="common">Human</name>
    <dbReference type="NCBI Taxonomy" id="9606"/>
    <lineage>
        <taxon>Eukaryota</taxon>
        <taxon>Metazoa</taxon>
        <taxon>Chordata</taxon>
        <taxon>Craniata</taxon>
        <taxon>Vertebrata</taxon>
        <taxon>Euteleostomi</taxon>
        <taxon>Mammalia</taxon>
        <taxon>Eutheria</taxon>
        <taxon>Euarchontoglires</taxon>
        <taxon>Primates</taxon>
        <taxon>Haplorrhini</taxon>
        <taxon>Catarrhini</taxon>
        <taxon>Hominidae</taxon>
        <taxon>Homo</taxon>
    </lineage>
</organism>
<protein>
    <recommendedName>
        <fullName evidence="7">E3 ubiquitin-protein ligase RNF182</fullName>
        <ecNumber evidence="5">2.3.2.27</ecNumber>
    </recommendedName>
    <alternativeName>
        <fullName>RING finger protein 182</fullName>
    </alternativeName>
    <alternativeName>
        <fullName evidence="8">RING-type E3 ubiquitin transferase RNF182</fullName>
    </alternativeName>
</protein>
<gene>
    <name type="primary">RNF182</name>
</gene>
<accession>Q8N6D2</accession>
<accession>B2RDG2</accession>
<accession>Q8NBG3</accession>
<reference key="1">
    <citation type="journal article" date="2004" name="Nat. Genet.">
        <title>Complete sequencing and characterization of 21,243 full-length human cDNAs.</title>
        <authorList>
            <person name="Ota T."/>
            <person name="Suzuki Y."/>
            <person name="Nishikawa T."/>
            <person name="Otsuki T."/>
            <person name="Sugiyama T."/>
            <person name="Irie R."/>
            <person name="Wakamatsu A."/>
            <person name="Hayashi K."/>
            <person name="Sato H."/>
            <person name="Nagai K."/>
            <person name="Kimura K."/>
            <person name="Makita H."/>
            <person name="Sekine M."/>
            <person name="Obayashi M."/>
            <person name="Nishi T."/>
            <person name="Shibahara T."/>
            <person name="Tanaka T."/>
            <person name="Ishii S."/>
            <person name="Yamamoto J."/>
            <person name="Saito K."/>
            <person name="Kawai Y."/>
            <person name="Isono Y."/>
            <person name="Nakamura Y."/>
            <person name="Nagahari K."/>
            <person name="Murakami K."/>
            <person name="Yasuda T."/>
            <person name="Iwayanagi T."/>
            <person name="Wagatsuma M."/>
            <person name="Shiratori A."/>
            <person name="Sudo H."/>
            <person name="Hosoiri T."/>
            <person name="Kaku Y."/>
            <person name="Kodaira H."/>
            <person name="Kondo H."/>
            <person name="Sugawara M."/>
            <person name="Takahashi M."/>
            <person name="Kanda K."/>
            <person name="Yokoi T."/>
            <person name="Furuya T."/>
            <person name="Kikkawa E."/>
            <person name="Omura Y."/>
            <person name="Abe K."/>
            <person name="Kamihara K."/>
            <person name="Katsuta N."/>
            <person name="Sato K."/>
            <person name="Tanikawa M."/>
            <person name="Yamazaki M."/>
            <person name="Ninomiya K."/>
            <person name="Ishibashi T."/>
            <person name="Yamashita H."/>
            <person name="Murakawa K."/>
            <person name="Fujimori K."/>
            <person name="Tanai H."/>
            <person name="Kimata M."/>
            <person name="Watanabe M."/>
            <person name="Hiraoka S."/>
            <person name="Chiba Y."/>
            <person name="Ishida S."/>
            <person name="Ono Y."/>
            <person name="Takiguchi S."/>
            <person name="Watanabe S."/>
            <person name="Yosida M."/>
            <person name="Hotuta T."/>
            <person name="Kusano J."/>
            <person name="Kanehori K."/>
            <person name="Takahashi-Fujii A."/>
            <person name="Hara H."/>
            <person name="Tanase T.-O."/>
            <person name="Nomura Y."/>
            <person name="Togiya S."/>
            <person name="Komai F."/>
            <person name="Hara R."/>
            <person name="Takeuchi K."/>
            <person name="Arita M."/>
            <person name="Imose N."/>
            <person name="Musashino K."/>
            <person name="Yuuki H."/>
            <person name="Oshima A."/>
            <person name="Sasaki N."/>
            <person name="Aotsuka S."/>
            <person name="Yoshikawa Y."/>
            <person name="Matsunawa H."/>
            <person name="Ichihara T."/>
            <person name="Shiohata N."/>
            <person name="Sano S."/>
            <person name="Moriya S."/>
            <person name="Momiyama H."/>
            <person name="Satoh N."/>
            <person name="Takami S."/>
            <person name="Terashima Y."/>
            <person name="Suzuki O."/>
            <person name="Nakagawa S."/>
            <person name="Senoh A."/>
            <person name="Mizoguchi H."/>
            <person name="Goto Y."/>
            <person name="Shimizu F."/>
            <person name="Wakebe H."/>
            <person name="Hishigaki H."/>
            <person name="Watanabe T."/>
            <person name="Sugiyama A."/>
            <person name="Takemoto M."/>
            <person name="Kawakami B."/>
            <person name="Yamazaki M."/>
            <person name="Watanabe K."/>
            <person name="Kumagai A."/>
            <person name="Itakura S."/>
            <person name="Fukuzumi Y."/>
            <person name="Fujimori Y."/>
            <person name="Komiyama M."/>
            <person name="Tashiro H."/>
            <person name="Tanigami A."/>
            <person name="Fujiwara T."/>
            <person name="Ono T."/>
            <person name="Yamada K."/>
            <person name="Fujii Y."/>
            <person name="Ozaki K."/>
            <person name="Hirao M."/>
            <person name="Ohmori Y."/>
            <person name="Kawabata A."/>
            <person name="Hikiji T."/>
            <person name="Kobatake N."/>
            <person name="Inagaki H."/>
            <person name="Ikema Y."/>
            <person name="Okamoto S."/>
            <person name="Okitani R."/>
            <person name="Kawakami T."/>
            <person name="Noguchi S."/>
            <person name="Itoh T."/>
            <person name="Shigeta K."/>
            <person name="Senba T."/>
            <person name="Matsumura K."/>
            <person name="Nakajima Y."/>
            <person name="Mizuno T."/>
            <person name="Morinaga M."/>
            <person name="Sasaki M."/>
            <person name="Togashi T."/>
            <person name="Oyama M."/>
            <person name="Hata H."/>
            <person name="Watanabe M."/>
            <person name="Komatsu T."/>
            <person name="Mizushima-Sugano J."/>
            <person name="Satoh T."/>
            <person name="Shirai Y."/>
            <person name="Takahashi Y."/>
            <person name="Nakagawa K."/>
            <person name="Okumura K."/>
            <person name="Nagase T."/>
            <person name="Nomura N."/>
            <person name="Kikuchi H."/>
            <person name="Masuho Y."/>
            <person name="Yamashita R."/>
            <person name="Nakai K."/>
            <person name="Yada T."/>
            <person name="Nakamura Y."/>
            <person name="Ohara O."/>
            <person name="Isogai T."/>
            <person name="Sugano S."/>
        </authorList>
    </citation>
    <scope>NUCLEOTIDE SEQUENCE [LARGE SCALE MRNA]</scope>
    <source>
        <tissue>Brain</tissue>
    </source>
</reference>
<reference key="2">
    <citation type="journal article" date="2003" name="Nature">
        <title>The DNA sequence and analysis of human chromosome 6.</title>
        <authorList>
            <person name="Mungall A.J."/>
            <person name="Palmer S.A."/>
            <person name="Sims S.K."/>
            <person name="Edwards C.A."/>
            <person name="Ashurst J.L."/>
            <person name="Wilming L."/>
            <person name="Jones M.C."/>
            <person name="Horton R."/>
            <person name="Hunt S.E."/>
            <person name="Scott C.E."/>
            <person name="Gilbert J.G.R."/>
            <person name="Clamp M.E."/>
            <person name="Bethel G."/>
            <person name="Milne S."/>
            <person name="Ainscough R."/>
            <person name="Almeida J.P."/>
            <person name="Ambrose K.D."/>
            <person name="Andrews T.D."/>
            <person name="Ashwell R.I.S."/>
            <person name="Babbage A.K."/>
            <person name="Bagguley C.L."/>
            <person name="Bailey J."/>
            <person name="Banerjee R."/>
            <person name="Barker D.J."/>
            <person name="Barlow K.F."/>
            <person name="Bates K."/>
            <person name="Beare D.M."/>
            <person name="Beasley H."/>
            <person name="Beasley O."/>
            <person name="Bird C.P."/>
            <person name="Blakey S.E."/>
            <person name="Bray-Allen S."/>
            <person name="Brook J."/>
            <person name="Brown A.J."/>
            <person name="Brown J.Y."/>
            <person name="Burford D.C."/>
            <person name="Burrill W."/>
            <person name="Burton J."/>
            <person name="Carder C."/>
            <person name="Carter N.P."/>
            <person name="Chapman J.C."/>
            <person name="Clark S.Y."/>
            <person name="Clark G."/>
            <person name="Clee C.M."/>
            <person name="Clegg S."/>
            <person name="Cobley V."/>
            <person name="Collier R.E."/>
            <person name="Collins J.E."/>
            <person name="Colman L.K."/>
            <person name="Corby N.R."/>
            <person name="Coville G.J."/>
            <person name="Culley K.M."/>
            <person name="Dhami P."/>
            <person name="Davies J."/>
            <person name="Dunn M."/>
            <person name="Earthrowl M.E."/>
            <person name="Ellington A.E."/>
            <person name="Evans K.A."/>
            <person name="Faulkner L."/>
            <person name="Francis M.D."/>
            <person name="Frankish A."/>
            <person name="Frankland J."/>
            <person name="French L."/>
            <person name="Garner P."/>
            <person name="Garnett J."/>
            <person name="Ghori M.J."/>
            <person name="Gilby L.M."/>
            <person name="Gillson C.J."/>
            <person name="Glithero R.J."/>
            <person name="Grafham D.V."/>
            <person name="Grant M."/>
            <person name="Gribble S."/>
            <person name="Griffiths C."/>
            <person name="Griffiths M.N.D."/>
            <person name="Hall R."/>
            <person name="Halls K.S."/>
            <person name="Hammond S."/>
            <person name="Harley J.L."/>
            <person name="Hart E.A."/>
            <person name="Heath P.D."/>
            <person name="Heathcott R."/>
            <person name="Holmes S.J."/>
            <person name="Howden P.J."/>
            <person name="Howe K.L."/>
            <person name="Howell G.R."/>
            <person name="Huckle E."/>
            <person name="Humphray S.J."/>
            <person name="Humphries M.D."/>
            <person name="Hunt A.R."/>
            <person name="Johnson C.M."/>
            <person name="Joy A.A."/>
            <person name="Kay M."/>
            <person name="Keenan S.J."/>
            <person name="Kimberley A.M."/>
            <person name="King A."/>
            <person name="Laird G.K."/>
            <person name="Langford C."/>
            <person name="Lawlor S."/>
            <person name="Leongamornlert D.A."/>
            <person name="Leversha M."/>
            <person name="Lloyd C.R."/>
            <person name="Lloyd D.M."/>
            <person name="Loveland J.E."/>
            <person name="Lovell J."/>
            <person name="Martin S."/>
            <person name="Mashreghi-Mohammadi M."/>
            <person name="Maslen G.L."/>
            <person name="Matthews L."/>
            <person name="McCann O.T."/>
            <person name="McLaren S.J."/>
            <person name="McLay K."/>
            <person name="McMurray A."/>
            <person name="Moore M.J.F."/>
            <person name="Mullikin J.C."/>
            <person name="Niblett D."/>
            <person name="Nickerson T."/>
            <person name="Novik K.L."/>
            <person name="Oliver K."/>
            <person name="Overton-Larty E.K."/>
            <person name="Parker A."/>
            <person name="Patel R."/>
            <person name="Pearce A.V."/>
            <person name="Peck A.I."/>
            <person name="Phillimore B.J.C.T."/>
            <person name="Phillips S."/>
            <person name="Plumb R.W."/>
            <person name="Porter K.M."/>
            <person name="Ramsey Y."/>
            <person name="Ranby S.A."/>
            <person name="Rice C.M."/>
            <person name="Ross M.T."/>
            <person name="Searle S.M."/>
            <person name="Sehra H.K."/>
            <person name="Sheridan E."/>
            <person name="Skuce C.D."/>
            <person name="Smith S."/>
            <person name="Smith M."/>
            <person name="Spraggon L."/>
            <person name="Squares S.L."/>
            <person name="Steward C.A."/>
            <person name="Sycamore N."/>
            <person name="Tamlyn-Hall G."/>
            <person name="Tester J."/>
            <person name="Theaker A.J."/>
            <person name="Thomas D.W."/>
            <person name="Thorpe A."/>
            <person name="Tracey A."/>
            <person name="Tromans A."/>
            <person name="Tubby B."/>
            <person name="Wall M."/>
            <person name="Wallis J.M."/>
            <person name="West A.P."/>
            <person name="White S.S."/>
            <person name="Whitehead S.L."/>
            <person name="Whittaker H."/>
            <person name="Wild A."/>
            <person name="Willey D.J."/>
            <person name="Wilmer T.E."/>
            <person name="Wood J.M."/>
            <person name="Wray P.W."/>
            <person name="Wyatt J.C."/>
            <person name="Young L."/>
            <person name="Younger R.M."/>
            <person name="Bentley D.R."/>
            <person name="Coulson A."/>
            <person name="Durbin R.M."/>
            <person name="Hubbard T."/>
            <person name="Sulston J.E."/>
            <person name="Dunham I."/>
            <person name="Rogers J."/>
            <person name="Beck S."/>
        </authorList>
    </citation>
    <scope>NUCLEOTIDE SEQUENCE [LARGE SCALE GENOMIC DNA]</scope>
</reference>
<reference key="3">
    <citation type="submission" date="2005-07" db="EMBL/GenBank/DDBJ databases">
        <authorList>
            <person name="Mural R.J."/>
            <person name="Istrail S."/>
            <person name="Sutton G.G."/>
            <person name="Florea L."/>
            <person name="Halpern A.L."/>
            <person name="Mobarry C.M."/>
            <person name="Lippert R."/>
            <person name="Walenz B."/>
            <person name="Shatkay H."/>
            <person name="Dew I."/>
            <person name="Miller J.R."/>
            <person name="Flanigan M.J."/>
            <person name="Edwards N.J."/>
            <person name="Bolanos R."/>
            <person name="Fasulo D."/>
            <person name="Halldorsson B.V."/>
            <person name="Hannenhalli S."/>
            <person name="Turner R."/>
            <person name="Yooseph S."/>
            <person name="Lu F."/>
            <person name="Nusskern D.R."/>
            <person name="Shue B.C."/>
            <person name="Zheng X.H."/>
            <person name="Zhong F."/>
            <person name="Delcher A.L."/>
            <person name="Huson D.H."/>
            <person name="Kravitz S.A."/>
            <person name="Mouchard L."/>
            <person name="Reinert K."/>
            <person name="Remington K.A."/>
            <person name="Clark A.G."/>
            <person name="Waterman M.S."/>
            <person name="Eichler E.E."/>
            <person name="Adams M.D."/>
            <person name="Hunkapiller M.W."/>
            <person name="Myers E.W."/>
            <person name="Venter J.C."/>
        </authorList>
    </citation>
    <scope>NUCLEOTIDE SEQUENCE [LARGE SCALE GENOMIC DNA]</scope>
</reference>
<reference key="4">
    <citation type="journal article" date="2004" name="Genome Res.">
        <title>The status, quality, and expansion of the NIH full-length cDNA project: the Mammalian Gene Collection (MGC).</title>
        <authorList>
            <consortium name="The MGC Project Team"/>
        </authorList>
    </citation>
    <scope>NUCLEOTIDE SEQUENCE [LARGE SCALE MRNA]</scope>
    <source>
        <tissue>Brain</tissue>
        <tissue>Testis</tissue>
    </source>
</reference>
<reference key="5">
    <citation type="journal article" date="2006" name="Science">
        <title>The consensus coding sequences of human breast and colorectal cancers.</title>
        <authorList>
            <person name="Sjoeblom T."/>
            <person name="Jones S."/>
            <person name="Wood L.D."/>
            <person name="Parsons D.W."/>
            <person name="Lin J."/>
            <person name="Barber T.D."/>
            <person name="Mandelker D."/>
            <person name="Leary R.J."/>
            <person name="Ptak J."/>
            <person name="Silliman N."/>
            <person name="Szabo S."/>
            <person name="Buckhaults P."/>
            <person name="Farrell C."/>
            <person name="Meeh P."/>
            <person name="Markowitz S.D."/>
            <person name="Willis J."/>
            <person name="Dawson D."/>
            <person name="Willson J.K.V."/>
            <person name="Gazdar A.F."/>
            <person name="Hartigan J."/>
            <person name="Wu L."/>
            <person name="Liu C."/>
            <person name="Parmigiani G."/>
            <person name="Park B.H."/>
            <person name="Bachman K.E."/>
            <person name="Papadopoulos N."/>
            <person name="Vogelstein B."/>
            <person name="Kinzler K.W."/>
            <person name="Velculescu V.E."/>
        </authorList>
    </citation>
    <scope>VARIANTS [LARGE SCALE ANALYSIS] ALA-43 AND LEU-58</scope>
</reference>
<reference key="6">
    <citation type="journal article" date="2008" name="Mol. Neurodegener.">
        <title>A novel brain-enriched E3 ubiquitin ligase RNF182 is up regulated in the brains of Alzheimer's patients and targets ATP6V0C for degradation.</title>
        <authorList>
            <person name="Liu Q.Y."/>
            <person name="Lei J.X."/>
            <person name="Sikorska M."/>
            <person name="Liu R."/>
        </authorList>
    </citation>
    <scope>FUNCTION</scope>
    <scope>INTERACTION WITH ATP6V0C</scope>
    <scope>SUBCELLULAR LOCATION</scope>
    <scope>TISSUE SPECIFICITY</scope>
    <scope>CATALYTIC ACTIVITY</scope>
</reference>
<reference key="7">
    <citation type="journal article" date="2019" name="FEBS Lett.">
        <title>The E3 ubiquitin ligase RNF182 inhibits TLR-triggered cytokine production through promoting p65 ubiquitination and degradation.</title>
        <authorList>
            <person name="Cao Y."/>
            <person name="Sun Y."/>
            <person name="Chang H."/>
            <person name="Sun X."/>
            <person name="Yang S."/>
        </authorList>
    </citation>
    <scope>FUNCTION</scope>
    <scope>TISSUE SPECIFICITY</scope>
    <scope>SUBCELLULAR LOCATION</scope>
</reference>
<comment type="function">
    <text evidence="5 6">E3 ubiquitin-protein ligase that mediates the ubiquitination of ATP6V0C and targets it to degradation via the ubiquitin-proteasome pathway (PubMed:18298843). Also plays a role in the inhibition of TLR-triggered innate immune response by mediating 'Lys'-48-linked ubiquitination and subsequent degradation of NF-kappa-B component RELA (PubMed:31432514).</text>
</comment>
<comment type="catalytic activity">
    <reaction evidence="5">
        <text>S-ubiquitinyl-[E2 ubiquitin-conjugating enzyme]-L-cysteine + [acceptor protein]-L-lysine = [E2 ubiquitin-conjugating enzyme]-L-cysteine + N(6)-ubiquitinyl-[acceptor protein]-L-lysine.</text>
        <dbReference type="EC" id="2.3.2.27"/>
    </reaction>
</comment>
<comment type="pathway">
    <text evidence="5">Protein modification; protein ubiquitination.</text>
</comment>
<comment type="subunit">
    <text evidence="5">Interacts with ATP6V0C.</text>
</comment>
<comment type="interaction">
    <interactant intactId="EBI-2130099">
        <id>Q8N6D2</id>
    </interactant>
    <interactant intactId="EBI-743540">
        <id>P51668</id>
        <label>UBE2D1</label>
    </interactant>
    <organismsDiffer>false</organismsDiffer>
    <experiments>3</experiments>
</comment>
<comment type="interaction">
    <interactant intactId="EBI-2130099">
        <id>Q8N6D2</id>
    </interactant>
    <interactant intactId="EBI-473850">
        <id>P61086</id>
        <label>UBE2K</label>
    </interactant>
    <organismsDiffer>false</organismsDiffer>
    <experiments>3</experiments>
</comment>
<comment type="interaction">
    <interactant intactId="EBI-2130099">
        <id>Q8N6D2</id>
    </interactant>
    <interactant intactId="EBI-711173">
        <id>P68036</id>
        <label>UBE2L3</label>
    </interactant>
    <organismsDiffer>false</organismsDiffer>
    <experiments>3</experiments>
</comment>
<comment type="interaction">
    <interactant intactId="EBI-2130099">
        <id>Q8N6D2</id>
    </interactant>
    <interactant intactId="EBI-1052908">
        <id>P61088</id>
        <label>UBE2N</label>
    </interactant>
    <organismsDiffer>false</organismsDiffer>
    <experiments>2</experiments>
</comment>
<comment type="subcellular location">
    <subcellularLocation>
        <location evidence="8">Membrane</location>
        <topology evidence="8">Multi-pass membrane protein</topology>
    </subcellularLocation>
    <subcellularLocation>
        <location evidence="5 6">Cytoplasm</location>
    </subcellularLocation>
</comment>
<comment type="tissue specificity">
    <text evidence="5 6">Up-regulated in neuronal cells subjected to cell death-inducing injuries, such as oxygen and glucose deprivation (at protein level). Could be up-regulated in Alzheimer disease brains (PubMed:18298843). Highly expressed in innate immune organs such as lymph nodes and spleen and in immune cells such as macrophages and dendritic cells (PubMed:31432514).</text>
</comment>
<comment type="domain">
    <text evidence="1">The RING-type zinc finger domain is required for E3 ligase activity.</text>
</comment>
<keyword id="KW-0963">Cytoplasm</keyword>
<keyword id="KW-0472">Membrane</keyword>
<keyword id="KW-0479">Metal-binding</keyword>
<keyword id="KW-1267">Proteomics identification</keyword>
<keyword id="KW-1185">Reference proteome</keyword>
<keyword id="KW-0808">Transferase</keyword>
<keyword id="KW-0812">Transmembrane</keyword>
<keyword id="KW-1133">Transmembrane helix</keyword>
<keyword id="KW-0833">Ubl conjugation pathway</keyword>
<keyword id="KW-0862">Zinc</keyword>
<keyword id="KW-0863">Zinc-finger</keyword>
<evidence type="ECO:0000250" key="1"/>
<evidence type="ECO:0000255" key="2"/>
<evidence type="ECO:0000255" key="3">
    <source>
        <dbReference type="PROSITE-ProRule" id="PRU00175"/>
    </source>
</evidence>
<evidence type="ECO:0000269" key="4">
    <source>
    </source>
</evidence>
<evidence type="ECO:0000269" key="5">
    <source>
    </source>
</evidence>
<evidence type="ECO:0000269" key="6">
    <source>
    </source>
</evidence>
<evidence type="ECO:0000303" key="7">
    <source>
    </source>
</evidence>
<evidence type="ECO:0000305" key="8"/>
<sequence>MASQPPEDTAESQASDELECKICYNRYNLKQRKPKVLECCHRVCAKCLYKIIDFGDSPQGVIVCPFCRFETCLPDDEVSSLPDDNNILVNLTCGGKGKKCLPENPTELLLTPKRLASLVSPSHTSSNCLVITIMEVQRESSPSLSSTPVVEFYRPASFDSVTTVSHNWTVWNCTSLLFQTSIRVLVWLLGLLYFSSLPLGIYLLVSKKVTLGVVFVSLVPSSLVILMVYGFCQCVCHEFLDCMAPPS</sequence>
<dbReference type="EC" id="2.3.2.27" evidence="5"/>
<dbReference type="EMBL" id="AK090576">
    <property type="protein sequence ID" value="BAC03481.1"/>
    <property type="molecule type" value="mRNA"/>
</dbReference>
<dbReference type="EMBL" id="AK315528">
    <property type="protein sequence ID" value="BAG37909.1"/>
    <property type="molecule type" value="mRNA"/>
</dbReference>
<dbReference type="EMBL" id="AL138718">
    <property type="status" value="NOT_ANNOTATED_CDS"/>
    <property type="molecule type" value="Genomic_DNA"/>
</dbReference>
<dbReference type="EMBL" id="CH471087">
    <property type="protein sequence ID" value="EAW55349.1"/>
    <property type="molecule type" value="Genomic_DNA"/>
</dbReference>
<dbReference type="EMBL" id="BC030666">
    <property type="protein sequence ID" value="AAH30666.1"/>
    <property type="molecule type" value="mRNA"/>
</dbReference>
<dbReference type="EMBL" id="BC050030">
    <property type="protein sequence ID" value="AAH50030.1"/>
    <property type="molecule type" value="mRNA"/>
</dbReference>
<dbReference type="CCDS" id="CCDS4531.1"/>
<dbReference type="RefSeq" id="NP_001158504.1">
    <property type="nucleotide sequence ID" value="NM_001165032.2"/>
</dbReference>
<dbReference type="RefSeq" id="NP_001158505.1">
    <property type="nucleotide sequence ID" value="NM_001165033.2"/>
</dbReference>
<dbReference type="RefSeq" id="NP_001158506.1">
    <property type="nucleotide sequence ID" value="NM_001165034.2"/>
</dbReference>
<dbReference type="RefSeq" id="NP_689950.1">
    <property type="nucleotide sequence ID" value="NM_152737.4"/>
</dbReference>
<dbReference type="RefSeq" id="XP_016865937.1">
    <property type="nucleotide sequence ID" value="XM_017010448.1"/>
</dbReference>
<dbReference type="RefSeq" id="XP_016865938.1">
    <property type="nucleotide sequence ID" value="XM_017010449.1"/>
</dbReference>
<dbReference type="RefSeq" id="XP_016865939.1">
    <property type="nucleotide sequence ID" value="XM_017010450.3"/>
</dbReference>
<dbReference type="RefSeq" id="XP_047274326.1">
    <property type="nucleotide sequence ID" value="XM_047418370.1"/>
</dbReference>
<dbReference type="RefSeq" id="XP_047274327.1">
    <property type="nucleotide sequence ID" value="XM_047418371.1"/>
</dbReference>
<dbReference type="RefSeq" id="XP_054210605.1">
    <property type="nucleotide sequence ID" value="XM_054354630.1"/>
</dbReference>
<dbReference type="RefSeq" id="XP_054210606.1">
    <property type="nucleotide sequence ID" value="XM_054354631.1"/>
</dbReference>
<dbReference type="RefSeq" id="XP_054210607.1">
    <property type="nucleotide sequence ID" value="XM_054354632.1"/>
</dbReference>
<dbReference type="SMR" id="Q8N6D2"/>
<dbReference type="BioGRID" id="128745">
    <property type="interactions" value="12"/>
</dbReference>
<dbReference type="FunCoup" id="Q8N6D2">
    <property type="interactions" value="546"/>
</dbReference>
<dbReference type="IntAct" id="Q8N6D2">
    <property type="interactions" value="6"/>
</dbReference>
<dbReference type="STRING" id="9606.ENSP00000420465"/>
<dbReference type="iPTMnet" id="Q8N6D2"/>
<dbReference type="PhosphoSitePlus" id="Q8N6D2"/>
<dbReference type="BioMuta" id="RNF182"/>
<dbReference type="DMDM" id="74751050"/>
<dbReference type="jPOST" id="Q8N6D2"/>
<dbReference type="MassIVE" id="Q8N6D2"/>
<dbReference type="PaxDb" id="9606-ENSP00000420465"/>
<dbReference type="PeptideAtlas" id="Q8N6D2"/>
<dbReference type="ProteomicsDB" id="72159"/>
<dbReference type="Pumba" id="Q8N6D2"/>
<dbReference type="Antibodypedia" id="1547">
    <property type="antibodies" value="129 antibodies from 18 providers"/>
</dbReference>
<dbReference type="DNASU" id="221687"/>
<dbReference type="Ensembl" id="ENST00000488300.6">
    <property type="protein sequence ID" value="ENSP00000420465.1"/>
    <property type="gene ID" value="ENSG00000180537.13"/>
</dbReference>
<dbReference type="Ensembl" id="ENST00000537388.1">
    <property type="protein sequence ID" value="ENSP00000441271.1"/>
    <property type="gene ID" value="ENSG00000180537.13"/>
</dbReference>
<dbReference type="Ensembl" id="ENST00000537663.5">
    <property type="protein sequence ID" value="ENSP00000443228.1"/>
    <property type="gene ID" value="ENSG00000180537.13"/>
</dbReference>
<dbReference type="Ensembl" id="ENST00000544682.5">
    <property type="protein sequence ID" value="ENSP00000442021.1"/>
    <property type="gene ID" value="ENSG00000180537.13"/>
</dbReference>
<dbReference type="GeneID" id="221687"/>
<dbReference type="KEGG" id="hsa:221687"/>
<dbReference type="MANE-Select" id="ENST00000488300.6">
    <property type="protein sequence ID" value="ENSP00000420465.1"/>
    <property type="RefSeq nucleotide sequence ID" value="NM_152737.4"/>
    <property type="RefSeq protein sequence ID" value="NP_689950.1"/>
</dbReference>
<dbReference type="UCSC" id="uc003nbe.4">
    <property type="organism name" value="human"/>
</dbReference>
<dbReference type="AGR" id="HGNC:28522"/>
<dbReference type="CTD" id="221687"/>
<dbReference type="DisGeNET" id="221687"/>
<dbReference type="GeneCards" id="RNF182"/>
<dbReference type="HGNC" id="HGNC:28522">
    <property type="gene designation" value="RNF182"/>
</dbReference>
<dbReference type="HPA" id="ENSG00000180537">
    <property type="expression patterns" value="Tissue enhanced (bone marrow, brain, retina)"/>
</dbReference>
<dbReference type="MIM" id="621026">
    <property type="type" value="gene"/>
</dbReference>
<dbReference type="neXtProt" id="NX_Q8N6D2"/>
<dbReference type="OpenTargets" id="ENSG00000180537"/>
<dbReference type="PharmGKB" id="PA134975171"/>
<dbReference type="VEuPathDB" id="HostDB:ENSG00000180537"/>
<dbReference type="eggNOG" id="KOG2177">
    <property type="taxonomic scope" value="Eukaryota"/>
</dbReference>
<dbReference type="GeneTree" id="ENSGT00730000111020"/>
<dbReference type="HOGENOM" id="CLU_100624_0_0_1"/>
<dbReference type="InParanoid" id="Q8N6D2"/>
<dbReference type="OMA" id="SWTVWNC"/>
<dbReference type="OrthoDB" id="8936585at2759"/>
<dbReference type="PAN-GO" id="Q8N6D2">
    <property type="GO annotations" value="3 GO annotations based on evolutionary models"/>
</dbReference>
<dbReference type="PhylomeDB" id="Q8N6D2"/>
<dbReference type="TreeFam" id="TF331690"/>
<dbReference type="PathwayCommons" id="Q8N6D2"/>
<dbReference type="Reactome" id="R-HSA-983168">
    <property type="pathway name" value="Antigen processing: Ubiquitination &amp; Proteasome degradation"/>
</dbReference>
<dbReference type="SignaLink" id="Q8N6D2"/>
<dbReference type="SIGNOR" id="Q8N6D2"/>
<dbReference type="UniPathway" id="UPA00143"/>
<dbReference type="BioGRID-ORCS" id="221687">
    <property type="hits" value="17 hits in 1190 CRISPR screens"/>
</dbReference>
<dbReference type="ChiTaRS" id="RNF182">
    <property type="organism name" value="human"/>
</dbReference>
<dbReference type="GenomeRNAi" id="221687"/>
<dbReference type="Pharos" id="Q8N6D2">
    <property type="development level" value="Tdark"/>
</dbReference>
<dbReference type="PRO" id="PR:Q8N6D2"/>
<dbReference type="Proteomes" id="UP000005640">
    <property type="component" value="Chromosome 6"/>
</dbReference>
<dbReference type="RNAct" id="Q8N6D2">
    <property type="molecule type" value="protein"/>
</dbReference>
<dbReference type="Bgee" id="ENSG00000180537">
    <property type="expression patterns" value="Expressed in endothelial cell and 138 other cell types or tissues"/>
</dbReference>
<dbReference type="ExpressionAtlas" id="Q8N6D2">
    <property type="expression patterns" value="baseline and differential"/>
</dbReference>
<dbReference type="GO" id="GO:0005737">
    <property type="term" value="C:cytoplasm"/>
    <property type="evidence" value="ECO:0000314"/>
    <property type="project" value="UniProtKB"/>
</dbReference>
<dbReference type="GO" id="GO:0016020">
    <property type="term" value="C:membrane"/>
    <property type="evidence" value="ECO:0007669"/>
    <property type="project" value="UniProtKB-SubCell"/>
</dbReference>
<dbReference type="GO" id="GO:0004842">
    <property type="term" value="F:ubiquitin-protein transferase activity"/>
    <property type="evidence" value="ECO:0000314"/>
    <property type="project" value="UniProtKB"/>
</dbReference>
<dbReference type="GO" id="GO:0008270">
    <property type="term" value="F:zinc ion binding"/>
    <property type="evidence" value="ECO:0007669"/>
    <property type="project" value="UniProtKB-KW"/>
</dbReference>
<dbReference type="GO" id="GO:0016567">
    <property type="term" value="P:protein ubiquitination"/>
    <property type="evidence" value="ECO:0000314"/>
    <property type="project" value="UniProtKB"/>
</dbReference>
<dbReference type="CDD" id="cd16555">
    <property type="entry name" value="RING-HC_RNF182"/>
    <property type="match status" value="1"/>
</dbReference>
<dbReference type="FunFam" id="3.30.40.10:FF:000319">
    <property type="entry name" value="E3 ubiquitin-protein ligase RNF182"/>
    <property type="match status" value="1"/>
</dbReference>
<dbReference type="Gene3D" id="3.30.40.10">
    <property type="entry name" value="Zinc/RING finger domain, C3HC4 (zinc finger)"/>
    <property type="match status" value="1"/>
</dbReference>
<dbReference type="InterPro" id="IPR042285">
    <property type="entry name" value="RNF182"/>
</dbReference>
<dbReference type="InterPro" id="IPR047986">
    <property type="entry name" value="RNF182_RING-HC"/>
</dbReference>
<dbReference type="InterPro" id="IPR001841">
    <property type="entry name" value="Znf_RING"/>
</dbReference>
<dbReference type="InterPro" id="IPR013083">
    <property type="entry name" value="Znf_RING/FYVE/PHD"/>
</dbReference>
<dbReference type="InterPro" id="IPR017907">
    <property type="entry name" value="Znf_RING_CS"/>
</dbReference>
<dbReference type="PANTHER" id="PTHR46675">
    <property type="entry name" value="E3 UBIQUITIN-PROTEIN LIGASE RNF182"/>
    <property type="match status" value="1"/>
</dbReference>
<dbReference type="PANTHER" id="PTHR46675:SF2">
    <property type="entry name" value="E3 UBIQUITIN-PROTEIN LIGASE RNF182"/>
    <property type="match status" value="1"/>
</dbReference>
<dbReference type="SMART" id="SM00184">
    <property type="entry name" value="RING"/>
    <property type="match status" value="1"/>
</dbReference>
<dbReference type="SUPFAM" id="SSF57850">
    <property type="entry name" value="RING/U-box"/>
    <property type="match status" value="1"/>
</dbReference>
<dbReference type="PROSITE" id="PS00518">
    <property type="entry name" value="ZF_RING_1"/>
    <property type="match status" value="1"/>
</dbReference>
<dbReference type="PROSITE" id="PS50089">
    <property type="entry name" value="ZF_RING_2"/>
    <property type="match status" value="1"/>
</dbReference>